<reference key="1">
    <citation type="journal article" date="2004" name="Nature">
        <title>Genome evolution in yeasts.</title>
        <authorList>
            <person name="Dujon B."/>
            <person name="Sherman D."/>
            <person name="Fischer G."/>
            <person name="Durrens P."/>
            <person name="Casaregola S."/>
            <person name="Lafontaine I."/>
            <person name="de Montigny J."/>
            <person name="Marck C."/>
            <person name="Neuveglise C."/>
            <person name="Talla E."/>
            <person name="Goffard N."/>
            <person name="Frangeul L."/>
            <person name="Aigle M."/>
            <person name="Anthouard V."/>
            <person name="Babour A."/>
            <person name="Barbe V."/>
            <person name="Barnay S."/>
            <person name="Blanchin S."/>
            <person name="Beckerich J.-M."/>
            <person name="Beyne E."/>
            <person name="Bleykasten C."/>
            <person name="Boisrame A."/>
            <person name="Boyer J."/>
            <person name="Cattolico L."/>
            <person name="Confanioleri F."/>
            <person name="de Daruvar A."/>
            <person name="Despons L."/>
            <person name="Fabre E."/>
            <person name="Fairhead C."/>
            <person name="Ferry-Dumazet H."/>
            <person name="Groppi A."/>
            <person name="Hantraye F."/>
            <person name="Hennequin C."/>
            <person name="Jauniaux N."/>
            <person name="Joyet P."/>
            <person name="Kachouri R."/>
            <person name="Kerrest A."/>
            <person name="Koszul R."/>
            <person name="Lemaire M."/>
            <person name="Lesur I."/>
            <person name="Ma L."/>
            <person name="Muller H."/>
            <person name="Nicaud J.-M."/>
            <person name="Nikolski M."/>
            <person name="Oztas S."/>
            <person name="Ozier-Kalogeropoulos O."/>
            <person name="Pellenz S."/>
            <person name="Potier S."/>
            <person name="Richard G.-F."/>
            <person name="Straub M.-L."/>
            <person name="Suleau A."/>
            <person name="Swennen D."/>
            <person name="Tekaia F."/>
            <person name="Wesolowski-Louvel M."/>
            <person name="Westhof E."/>
            <person name="Wirth B."/>
            <person name="Zeniou-Meyer M."/>
            <person name="Zivanovic Y."/>
            <person name="Bolotin-Fukuhara M."/>
            <person name="Thierry A."/>
            <person name="Bouchier C."/>
            <person name="Caudron B."/>
            <person name="Scarpelli C."/>
            <person name="Gaillardin C."/>
            <person name="Weissenbach J."/>
            <person name="Wincker P."/>
            <person name="Souciet J.-L."/>
        </authorList>
    </citation>
    <scope>NUCLEOTIDE SEQUENCE [LARGE SCALE GENOMIC DNA]</scope>
    <source>
        <strain>ATCC 36239 / CBS 767 / BCRC 21394 / JCM 1990 / NBRC 0083 / IGC 2968</strain>
    </source>
</reference>
<comment type="function">
    <text evidence="1">N-acetylglutamate synthase involved in arginine biosynthesis.</text>
</comment>
<comment type="catalytic activity">
    <reaction>
        <text>L-glutamate + acetyl-CoA = N-acetyl-L-glutamate + CoA + H(+)</text>
        <dbReference type="Rhea" id="RHEA:24292"/>
        <dbReference type="ChEBI" id="CHEBI:15378"/>
        <dbReference type="ChEBI" id="CHEBI:29985"/>
        <dbReference type="ChEBI" id="CHEBI:44337"/>
        <dbReference type="ChEBI" id="CHEBI:57287"/>
        <dbReference type="ChEBI" id="CHEBI:57288"/>
        <dbReference type="EC" id="2.3.1.1"/>
    </reaction>
</comment>
<comment type="pathway">
    <text>Amino-acid biosynthesis; L-arginine biosynthesis; N(2)-acetyl-L-ornithine from L-glutamate: step 1/4.</text>
</comment>
<comment type="subcellular location">
    <subcellularLocation>
        <location evidence="1">Mitochondrion</location>
    </subcellularLocation>
</comment>
<comment type="similarity">
    <text evidence="4">Belongs to the acetyltransferase family.</text>
</comment>
<dbReference type="EC" id="2.3.1.1"/>
<dbReference type="EMBL" id="CR382133">
    <property type="protein sequence ID" value="CAG84481.2"/>
    <property type="molecule type" value="Genomic_DNA"/>
</dbReference>
<dbReference type="RefSeq" id="XP_456526.2">
    <property type="nucleotide sequence ID" value="XM_456526.1"/>
</dbReference>
<dbReference type="SMR" id="Q6BZ43"/>
<dbReference type="FunCoup" id="Q6BZ43">
    <property type="interactions" value="110"/>
</dbReference>
<dbReference type="STRING" id="284592.Q6BZ43"/>
<dbReference type="GeneID" id="2899813"/>
<dbReference type="KEGG" id="dha:DEHA2A04708g"/>
<dbReference type="VEuPathDB" id="FungiDB:DEHA2A04708g"/>
<dbReference type="eggNOG" id="KOG2436">
    <property type="taxonomic scope" value="Eukaryota"/>
</dbReference>
<dbReference type="HOGENOM" id="CLU_013088_0_0_1"/>
<dbReference type="InParanoid" id="Q6BZ43"/>
<dbReference type="OMA" id="NAMVRDC"/>
<dbReference type="OrthoDB" id="5585968at2759"/>
<dbReference type="UniPathway" id="UPA00068">
    <property type="reaction ID" value="UER00106"/>
</dbReference>
<dbReference type="Proteomes" id="UP000000599">
    <property type="component" value="Chromosome A"/>
</dbReference>
<dbReference type="GO" id="GO:0005759">
    <property type="term" value="C:mitochondrial matrix"/>
    <property type="evidence" value="ECO:0007669"/>
    <property type="project" value="TreeGrafter"/>
</dbReference>
<dbReference type="GO" id="GO:0004042">
    <property type="term" value="F:L-glutamate N-acetyltransferase activity"/>
    <property type="evidence" value="ECO:0007669"/>
    <property type="project" value="InterPro"/>
</dbReference>
<dbReference type="GO" id="GO:0006526">
    <property type="term" value="P:L-arginine biosynthetic process"/>
    <property type="evidence" value="ECO:0007669"/>
    <property type="project" value="UniProtKB-UniPathway"/>
</dbReference>
<dbReference type="GO" id="GO:0006592">
    <property type="term" value="P:ornithine biosynthetic process"/>
    <property type="evidence" value="ECO:0007669"/>
    <property type="project" value="TreeGrafter"/>
</dbReference>
<dbReference type="CDD" id="cd04266">
    <property type="entry name" value="DUF619-NAGS-FABP"/>
    <property type="match status" value="1"/>
</dbReference>
<dbReference type="Gene3D" id="3.40.630.30">
    <property type="match status" value="1"/>
</dbReference>
<dbReference type="InterPro" id="IPR011190">
    <property type="entry name" value="GlcNAc_Synth_fun"/>
</dbReference>
<dbReference type="InterPro" id="IPR006855">
    <property type="entry name" value="Vertebrate-like_GNAT_dom"/>
</dbReference>
<dbReference type="PANTHER" id="PTHR23342:SF4">
    <property type="entry name" value="AMINO-ACID ACETYLTRANSFERASE, MITOCHONDRIAL"/>
    <property type="match status" value="1"/>
</dbReference>
<dbReference type="PANTHER" id="PTHR23342">
    <property type="entry name" value="N-ACETYLGLUTAMATE SYNTHASE"/>
    <property type="match status" value="1"/>
</dbReference>
<dbReference type="Pfam" id="PF04768">
    <property type="entry name" value="NAT"/>
    <property type="match status" value="1"/>
</dbReference>
<dbReference type="PIRSF" id="PIRSF007892">
    <property type="entry name" value="NAGS_fungal"/>
    <property type="match status" value="1"/>
</dbReference>
<dbReference type="PROSITE" id="PS51731">
    <property type="entry name" value="GNAT_NAGS"/>
    <property type="match status" value="1"/>
</dbReference>
<keyword id="KW-0012">Acyltransferase</keyword>
<keyword id="KW-0028">Amino-acid biosynthesis</keyword>
<keyword id="KW-0496">Mitochondrion</keyword>
<keyword id="KW-1185">Reference proteome</keyword>
<keyword id="KW-0808">Transferase</keyword>
<keyword id="KW-0809">Transit peptide</keyword>
<gene>
    <name type="primary">ARG2</name>
    <name type="ordered locus">DEHA2A04708g</name>
</gene>
<name>NAGS_DEBHA</name>
<accession>Q6BZ43</accession>
<evidence type="ECO:0000250" key="1"/>
<evidence type="ECO:0000255" key="2"/>
<evidence type="ECO:0000255" key="3">
    <source>
        <dbReference type="PROSITE-ProRule" id="PRU00532"/>
    </source>
</evidence>
<evidence type="ECO:0000305" key="4"/>
<protein>
    <recommendedName>
        <fullName>Amino-acid acetyltransferase, mitochondrial</fullName>
        <ecNumber>2.3.1.1</ecNumber>
    </recommendedName>
    <alternativeName>
        <fullName>Arginine-requiring protein 2</fullName>
    </alternativeName>
    <alternativeName>
        <fullName>Glutamate N-acetyltransferase</fullName>
    </alternativeName>
    <alternativeName>
        <fullName>N-acetylglutamate synthase</fullName>
        <shortName>AGS</shortName>
        <shortName>NAGS</shortName>
    </alternativeName>
</protein>
<proteinExistence type="inferred from homology"/>
<sequence>MSKLRNLNRQFISNLKTHETVTNAKRNLILSILKSTTTKREARNYLNKYQNQFDFSDITFNNGVPSNSLEKRDSQRELFINRFLNKQNPFTNIYDDETKLQKIPLRLALFKIKFQSISLENWKGMAETFKRLIHLGISPIIMLDYDHLPANTFRNNELYMLNQTNKIMNILGKPTEENDLKTIIMRSLFTKKTINDKDLAIDNLESVLIPLYQGVIPIIQPIVYNASTCMQEFIDSNDLLFSLCSSLLTTKNVLSIEKVVMIDPIGGIPSIERNQTSHVFINLSQEYSDIVSELYIGFIKPEYRIFHMNNLKAMNKTLTLVSDKTGNDETTGIITTPDIMSVNNDQLNPIIYNVLTDRSIISSSLPTSHNRTPELSTSILKKGVDVNILDALNYPKAFTLNNLVQDGSVNKSKLVDLIDDSFGKKLDTEKYFDRINDSLATVVIVGDYDGAAIITWETCSKTNEKIAYLDKFAIASVNQGLPGLADIIFKIILQSHPNELIWRSRKNNPVNKWYFERCCGTLSNPGSQWKIFYTGDIFNKKIDKLKKQGIPGGVNIHGKMHQYSDITENIPPSFL</sequence>
<feature type="transit peptide" description="Mitochondrion" evidence="2">
    <location>
        <begin position="1"/>
        <end position="35"/>
    </location>
</feature>
<feature type="chain" id="PRO_0000372562" description="Amino-acid acetyltransferase, mitochondrial">
    <location>
        <begin position="36"/>
        <end position="575"/>
    </location>
</feature>
<feature type="domain" description="N-acetyltransferase" evidence="3">
    <location>
        <begin position="398"/>
        <end position="557"/>
    </location>
</feature>
<organism>
    <name type="scientific">Debaryomyces hansenii (strain ATCC 36239 / CBS 767 / BCRC 21394 / JCM 1990 / NBRC 0083 / IGC 2968)</name>
    <name type="common">Yeast</name>
    <name type="synonym">Torulaspora hansenii</name>
    <dbReference type="NCBI Taxonomy" id="284592"/>
    <lineage>
        <taxon>Eukaryota</taxon>
        <taxon>Fungi</taxon>
        <taxon>Dikarya</taxon>
        <taxon>Ascomycota</taxon>
        <taxon>Saccharomycotina</taxon>
        <taxon>Pichiomycetes</taxon>
        <taxon>Debaryomycetaceae</taxon>
        <taxon>Debaryomyces</taxon>
    </lineage>
</organism>